<sequence>MAGKRDKIRLISSADTGHFYTTDKNKKNTPGKLEFKKYDPRVRRHVIYKEGKIK</sequence>
<comment type="similarity">
    <text evidence="1">Belongs to the bacterial ribosomal protein bL33 family.</text>
</comment>
<proteinExistence type="inferred from homology"/>
<accession>B2I8L8</accession>
<gene>
    <name evidence="1" type="primary">rpmG</name>
    <name type="ordered locus">XfasM23_0482</name>
</gene>
<organism>
    <name type="scientific">Xylella fastidiosa (strain M23)</name>
    <dbReference type="NCBI Taxonomy" id="405441"/>
    <lineage>
        <taxon>Bacteria</taxon>
        <taxon>Pseudomonadati</taxon>
        <taxon>Pseudomonadota</taxon>
        <taxon>Gammaproteobacteria</taxon>
        <taxon>Lysobacterales</taxon>
        <taxon>Lysobacteraceae</taxon>
        <taxon>Xylella</taxon>
    </lineage>
</organism>
<evidence type="ECO:0000255" key="1">
    <source>
        <dbReference type="HAMAP-Rule" id="MF_00294"/>
    </source>
</evidence>
<evidence type="ECO:0000305" key="2"/>
<dbReference type="EMBL" id="CP001011">
    <property type="protein sequence ID" value="ACB91929.1"/>
    <property type="molecule type" value="Genomic_DNA"/>
</dbReference>
<dbReference type="RefSeq" id="WP_004086566.1">
    <property type="nucleotide sequence ID" value="NC_010577.1"/>
</dbReference>
<dbReference type="SMR" id="B2I8L8"/>
<dbReference type="GeneID" id="93904191"/>
<dbReference type="KEGG" id="xfn:XfasM23_0482"/>
<dbReference type="HOGENOM" id="CLU_190949_1_1_6"/>
<dbReference type="Proteomes" id="UP000001698">
    <property type="component" value="Chromosome"/>
</dbReference>
<dbReference type="GO" id="GO:0022625">
    <property type="term" value="C:cytosolic large ribosomal subunit"/>
    <property type="evidence" value="ECO:0007669"/>
    <property type="project" value="TreeGrafter"/>
</dbReference>
<dbReference type="GO" id="GO:0003735">
    <property type="term" value="F:structural constituent of ribosome"/>
    <property type="evidence" value="ECO:0007669"/>
    <property type="project" value="InterPro"/>
</dbReference>
<dbReference type="GO" id="GO:0006412">
    <property type="term" value="P:translation"/>
    <property type="evidence" value="ECO:0007669"/>
    <property type="project" value="UniProtKB-UniRule"/>
</dbReference>
<dbReference type="FunFam" id="2.20.28.120:FF:000001">
    <property type="entry name" value="50S ribosomal protein L33"/>
    <property type="match status" value="1"/>
</dbReference>
<dbReference type="Gene3D" id="2.20.28.120">
    <property type="entry name" value="Ribosomal protein L33"/>
    <property type="match status" value="1"/>
</dbReference>
<dbReference type="HAMAP" id="MF_00294">
    <property type="entry name" value="Ribosomal_bL33"/>
    <property type="match status" value="1"/>
</dbReference>
<dbReference type="InterPro" id="IPR001705">
    <property type="entry name" value="Ribosomal_bL33"/>
</dbReference>
<dbReference type="InterPro" id="IPR018264">
    <property type="entry name" value="Ribosomal_bL33_CS"/>
</dbReference>
<dbReference type="InterPro" id="IPR038584">
    <property type="entry name" value="Ribosomal_bL33_sf"/>
</dbReference>
<dbReference type="InterPro" id="IPR011332">
    <property type="entry name" value="Ribosomal_zn-bd"/>
</dbReference>
<dbReference type="NCBIfam" id="NF001860">
    <property type="entry name" value="PRK00595.1"/>
    <property type="match status" value="1"/>
</dbReference>
<dbReference type="NCBIfam" id="TIGR01023">
    <property type="entry name" value="rpmG_bact"/>
    <property type="match status" value="1"/>
</dbReference>
<dbReference type="PANTHER" id="PTHR15238">
    <property type="entry name" value="54S RIBOSOMAL PROTEIN L39, MITOCHONDRIAL"/>
    <property type="match status" value="1"/>
</dbReference>
<dbReference type="PANTHER" id="PTHR15238:SF1">
    <property type="entry name" value="LARGE RIBOSOMAL SUBUNIT PROTEIN BL33M"/>
    <property type="match status" value="1"/>
</dbReference>
<dbReference type="Pfam" id="PF00471">
    <property type="entry name" value="Ribosomal_L33"/>
    <property type="match status" value="1"/>
</dbReference>
<dbReference type="SUPFAM" id="SSF57829">
    <property type="entry name" value="Zn-binding ribosomal proteins"/>
    <property type="match status" value="1"/>
</dbReference>
<dbReference type="PROSITE" id="PS00582">
    <property type="entry name" value="RIBOSOMAL_L33"/>
    <property type="match status" value="1"/>
</dbReference>
<keyword id="KW-0687">Ribonucleoprotein</keyword>
<keyword id="KW-0689">Ribosomal protein</keyword>
<protein>
    <recommendedName>
        <fullName evidence="1">Large ribosomal subunit protein bL33</fullName>
    </recommendedName>
    <alternativeName>
        <fullName evidence="2">50S ribosomal protein L33</fullName>
    </alternativeName>
</protein>
<name>RL33_XYLF2</name>
<reference key="1">
    <citation type="journal article" date="2010" name="J. Bacteriol.">
        <title>Whole genome sequences of two Xylella fastidiosa strains (M12 and M23) causing almond leaf scorch disease in California.</title>
        <authorList>
            <person name="Chen J."/>
            <person name="Xie G."/>
            <person name="Han S."/>
            <person name="Chertkov O."/>
            <person name="Sims D."/>
            <person name="Civerolo E.L."/>
        </authorList>
    </citation>
    <scope>NUCLEOTIDE SEQUENCE [LARGE SCALE GENOMIC DNA]</scope>
    <source>
        <strain>M23</strain>
    </source>
</reference>
<feature type="chain" id="PRO_0000356777" description="Large ribosomal subunit protein bL33">
    <location>
        <begin position="1"/>
        <end position="54"/>
    </location>
</feature>